<name>CHS1_AJEDE</name>
<proteinExistence type="inferred from homology"/>
<dbReference type="EC" id="2.4.1.16"/>
<dbReference type="EMBL" id="M82942">
    <property type="protein sequence ID" value="AAA32917.1"/>
    <property type="molecule type" value="Genomic_DNA"/>
</dbReference>
<dbReference type="PIR" id="B38192">
    <property type="entry name" value="B38192"/>
</dbReference>
<dbReference type="SMR" id="P30579"/>
<dbReference type="CAZy" id="GT2">
    <property type="family name" value="Glycosyltransferase Family 2"/>
</dbReference>
<dbReference type="GO" id="GO:0030428">
    <property type="term" value="C:cell septum"/>
    <property type="evidence" value="ECO:0007669"/>
    <property type="project" value="TreeGrafter"/>
</dbReference>
<dbReference type="GO" id="GO:0005886">
    <property type="term" value="C:plasma membrane"/>
    <property type="evidence" value="ECO:0007669"/>
    <property type="project" value="UniProtKB-SubCell"/>
</dbReference>
<dbReference type="GO" id="GO:0004100">
    <property type="term" value="F:chitin synthase activity"/>
    <property type="evidence" value="ECO:0007669"/>
    <property type="project" value="UniProtKB-EC"/>
</dbReference>
<dbReference type="GO" id="GO:0071555">
    <property type="term" value="P:cell wall organization"/>
    <property type="evidence" value="ECO:0007669"/>
    <property type="project" value="UniProtKB-KW"/>
</dbReference>
<dbReference type="GO" id="GO:0006031">
    <property type="term" value="P:chitin biosynthetic process"/>
    <property type="evidence" value="ECO:0007669"/>
    <property type="project" value="InterPro"/>
</dbReference>
<dbReference type="InterPro" id="IPR004835">
    <property type="entry name" value="Chitin_synth"/>
</dbReference>
<dbReference type="InterPro" id="IPR004834">
    <property type="entry name" value="Chitin_synth_fun"/>
</dbReference>
<dbReference type="PANTHER" id="PTHR22914">
    <property type="entry name" value="CHITIN SYNTHASE"/>
    <property type="match status" value="1"/>
</dbReference>
<dbReference type="PANTHER" id="PTHR22914:SF9">
    <property type="entry name" value="CHITIN SYNTHASE 1"/>
    <property type="match status" value="1"/>
</dbReference>
<dbReference type="Pfam" id="PF01644">
    <property type="entry name" value="Chitin_synth_1"/>
    <property type="match status" value="1"/>
</dbReference>
<accession>P30579</accession>
<comment type="function">
    <text evidence="1">Polymerizes chitin, a structural polymer of the cell wall and septum, by transferring the sugar moiety of UDP-GlcNAc to the non-reducing end of the growing chitin polymer.</text>
</comment>
<comment type="catalytic activity">
    <reaction>
        <text>[(1-&gt;4)-N-acetyl-beta-D-glucosaminyl](n) + UDP-N-acetyl-alpha-D-glucosamine = [(1-&gt;4)-N-acetyl-beta-D-glucosaminyl](n+1) + UDP + H(+)</text>
        <dbReference type="Rhea" id="RHEA:16637"/>
        <dbReference type="Rhea" id="RHEA-COMP:9593"/>
        <dbReference type="Rhea" id="RHEA-COMP:9595"/>
        <dbReference type="ChEBI" id="CHEBI:15378"/>
        <dbReference type="ChEBI" id="CHEBI:17029"/>
        <dbReference type="ChEBI" id="CHEBI:57705"/>
        <dbReference type="ChEBI" id="CHEBI:58223"/>
        <dbReference type="EC" id="2.4.1.16"/>
    </reaction>
</comment>
<comment type="subcellular location">
    <subcellularLocation>
        <location evidence="1">Cell membrane</location>
        <topology evidence="1">Multi-pass membrane protein</topology>
    </subcellularLocation>
</comment>
<comment type="similarity">
    <text evidence="1">Belongs to the chitin synthase family. Class I subfamily.</text>
</comment>
<keyword id="KW-1003">Cell membrane</keyword>
<keyword id="KW-0961">Cell wall biogenesis/degradation</keyword>
<keyword id="KW-0328">Glycosyltransferase</keyword>
<keyword id="KW-0472">Membrane</keyword>
<keyword id="KW-0808">Transferase</keyword>
<keyword id="KW-0812">Transmembrane</keyword>
<reference key="1">
    <citation type="journal article" date="1992" name="Proc. Natl. Acad. Sci. U.S.A.">
        <title>Classification of fungal chitin synthases.</title>
        <authorList>
            <person name="Bowen A.R."/>
            <person name="Chen-Wu J.L.-P."/>
            <person name="Momany M."/>
            <person name="Young R."/>
            <person name="Szaniszlo P.J."/>
            <person name="Robbins P.W."/>
        </authorList>
    </citation>
    <scope>NUCLEOTIDE SEQUENCE [GENOMIC DNA]</scope>
</reference>
<evidence type="ECO:0000305" key="1"/>
<organism>
    <name type="scientific">Ajellomyces dermatitidis</name>
    <name type="common">Blastomyces dermatitidis</name>
    <dbReference type="NCBI Taxonomy" id="5039"/>
    <lineage>
        <taxon>Eukaryota</taxon>
        <taxon>Fungi</taxon>
        <taxon>Dikarya</taxon>
        <taxon>Ascomycota</taxon>
        <taxon>Pezizomycotina</taxon>
        <taxon>Eurotiomycetes</taxon>
        <taxon>Eurotiomycetidae</taxon>
        <taxon>Onygenales</taxon>
        <taxon>Ajellomycetaceae</taxon>
        <taxon>Blastomyces</taxon>
    </lineage>
</organism>
<sequence length="188" mass="21112">FLFARTMIGVFKNIEYMCSRTNSKTWGKEAWKKIVVCVVSDGRAKINQRTKAVLAGLGVYQDGIAKQQVNGKDVTAHIYEYTTQIGMELKGTQVHLKPRSGVPVQMIFCLKEKNQKKINSHRWFFQAFGRVLDPNICVLLDAGTKPGRDSIYHLWRAFDLHPMCGGACGEIKTMLSHGKKLINPLVAA</sequence>
<feature type="chain" id="PRO_0000193677" description="Chitin synthase 1">
    <location>
        <begin position="1" status="less than"/>
        <end position="188" status="greater than"/>
    </location>
</feature>
<feature type="non-terminal residue">
    <location>
        <position position="1"/>
    </location>
</feature>
<feature type="non-terminal residue">
    <location>
        <position position="188"/>
    </location>
</feature>
<gene>
    <name type="primary">CHS1</name>
</gene>
<protein>
    <recommendedName>
        <fullName>Chitin synthase 1</fullName>
        <ecNumber>2.4.1.16</ecNumber>
    </recommendedName>
    <alternativeName>
        <fullName>Chitin-UDP acetyl-glucosaminyl transferase 1</fullName>
    </alternativeName>
    <alternativeName>
        <fullName>Class-I chitin synthase 1</fullName>
    </alternativeName>
</protein>